<gene>
    <name evidence="1" type="primary">gpsA</name>
    <name type="ordered locus">LCA_0518</name>
</gene>
<proteinExistence type="inferred from homology"/>
<feature type="chain" id="PRO_0000255325" description="Glycerol-3-phosphate dehydrogenase [NAD(P)+]">
    <location>
        <begin position="1"/>
        <end position="340"/>
    </location>
</feature>
<feature type="active site" description="Proton acceptor" evidence="1">
    <location>
        <position position="196"/>
    </location>
</feature>
<feature type="binding site" evidence="1">
    <location>
        <position position="12"/>
    </location>
    <ligand>
        <name>NADPH</name>
        <dbReference type="ChEBI" id="CHEBI:57783"/>
    </ligand>
</feature>
<feature type="binding site" evidence="1">
    <location>
        <position position="13"/>
    </location>
    <ligand>
        <name>NADPH</name>
        <dbReference type="ChEBI" id="CHEBI:57783"/>
    </ligand>
</feature>
<feature type="binding site" evidence="1">
    <location>
        <position position="110"/>
    </location>
    <ligand>
        <name>NADPH</name>
        <dbReference type="ChEBI" id="CHEBI:57783"/>
    </ligand>
</feature>
<feature type="binding site" evidence="1">
    <location>
        <position position="110"/>
    </location>
    <ligand>
        <name>sn-glycerol 3-phosphate</name>
        <dbReference type="ChEBI" id="CHEBI:57597"/>
    </ligand>
</feature>
<feature type="binding site" evidence="1">
    <location>
        <position position="141"/>
    </location>
    <ligand>
        <name>sn-glycerol 3-phosphate</name>
        <dbReference type="ChEBI" id="CHEBI:57597"/>
    </ligand>
</feature>
<feature type="binding site" evidence="1">
    <location>
        <position position="143"/>
    </location>
    <ligand>
        <name>sn-glycerol 3-phosphate</name>
        <dbReference type="ChEBI" id="CHEBI:57597"/>
    </ligand>
</feature>
<feature type="binding site" evidence="1">
    <location>
        <position position="145"/>
    </location>
    <ligand>
        <name>NADPH</name>
        <dbReference type="ChEBI" id="CHEBI:57783"/>
    </ligand>
</feature>
<feature type="binding site" evidence="1">
    <location>
        <position position="196"/>
    </location>
    <ligand>
        <name>sn-glycerol 3-phosphate</name>
        <dbReference type="ChEBI" id="CHEBI:57597"/>
    </ligand>
</feature>
<feature type="binding site" evidence="1">
    <location>
        <position position="249"/>
    </location>
    <ligand>
        <name>sn-glycerol 3-phosphate</name>
        <dbReference type="ChEBI" id="CHEBI:57597"/>
    </ligand>
</feature>
<feature type="binding site" evidence="1">
    <location>
        <position position="259"/>
    </location>
    <ligand>
        <name>sn-glycerol 3-phosphate</name>
        <dbReference type="ChEBI" id="CHEBI:57597"/>
    </ligand>
</feature>
<feature type="binding site" evidence="1">
    <location>
        <position position="260"/>
    </location>
    <ligand>
        <name>NADPH</name>
        <dbReference type="ChEBI" id="CHEBI:57783"/>
    </ligand>
</feature>
<feature type="binding site" evidence="1">
    <location>
        <position position="260"/>
    </location>
    <ligand>
        <name>sn-glycerol 3-phosphate</name>
        <dbReference type="ChEBI" id="CHEBI:57597"/>
    </ligand>
</feature>
<feature type="binding site" evidence="1">
    <location>
        <position position="261"/>
    </location>
    <ligand>
        <name>sn-glycerol 3-phosphate</name>
        <dbReference type="ChEBI" id="CHEBI:57597"/>
    </ligand>
</feature>
<feature type="binding site" evidence="1">
    <location>
        <position position="284"/>
    </location>
    <ligand>
        <name>NADPH</name>
        <dbReference type="ChEBI" id="CHEBI:57783"/>
    </ligand>
</feature>
<feature type="binding site" evidence="1">
    <location>
        <position position="286"/>
    </location>
    <ligand>
        <name>NADPH</name>
        <dbReference type="ChEBI" id="CHEBI:57783"/>
    </ligand>
</feature>
<reference key="1">
    <citation type="journal article" date="2005" name="Nat. Biotechnol.">
        <title>The complete genome sequence of the meat-borne lactic acid bacterium Lactobacillus sakei 23K.</title>
        <authorList>
            <person name="Chaillou S."/>
            <person name="Champomier-Verges M.-C."/>
            <person name="Cornet M."/>
            <person name="Crutz-Le Coq A.-M."/>
            <person name="Dudez A.-M."/>
            <person name="Martin V."/>
            <person name="Beaufils S."/>
            <person name="Darbon-Rongere E."/>
            <person name="Bossy R."/>
            <person name="Loux V."/>
            <person name="Zagorec M."/>
        </authorList>
    </citation>
    <scope>NUCLEOTIDE SEQUENCE [LARGE SCALE GENOMIC DNA]</scope>
    <source>
        <strain>23K</strain>
    </source>
</reference>
<sequence>MTVNVAVLGAGSWGTILANLLVENGHHVELWGNDPEKVAEINEQHTNKHYLPEFKIDSRLHATLDLNEAFEAVDVVLFVIPTQVIRLVAEQIAPVLEAKGVKPVIVTASKGLEQGSHKRISEVLTETIPADIRNGIVVLSGPSHAEDVAMKDITTLTAASTDLVQAQWIQEIFMNDYFRLYTNTDVIGVEMGAALKNVIALGAGALHGLGYGDNTKAALMTRGLAEISRLGVAMGANPLTFIGLSGVGDLIVTGTSVHSRNWRTGNALGEGQKLDDVLENMGMVVEGVATCKAAYELAQQRSVDMPITNAIYNVLYRGCDIRTEIGNLMQRSGKPEIDFK</sequence>
<dbReference type="EC" id="1.1.1.94" evidence="1"/>
<dbReference type="EMBL" id="CR936503">
    <property type="protein sequence ID" value="CAI54818.1"/>
    <property type="molecule type" value="Genomic_DNA"/>
</dbReference>
<dbReference type="RefSeq" id="WP_011374226.1">
    <property type="nucleotide sequence ID" value="NC_007576.1"/>
</dbReference>
<dbReference type="SMR" id="Q38YA9"/>
<dbReference type="STRING" id="314315.LCA_0518"/>
<dbReference type="KEGG" id="lsa:LCA_0518"/>
<dbReference type="eggNOG" id="COG0240">
    <property type="taxonomic scope" value="Bacteria"/>
</dbReference>
<dbReference type="HOGENOM" id="CLU_033449_0_2_9"/>
<dbReference type="OrthoDB" id="9812273at2"/>
<dbReference type="UniPathway" id="UPA00940"/>
<dbReference type="Proteomes" id="UP000002707">
    <property type="component" value="Chromosome"/>
</dbReference>
<dbReference type="GO" id="GO:0005829">
    <property type="term" value="C:cytosol"/>
    <property type="evidence" value="ECO:0007669"/>
    <property type="project" value="TreeGrafter"/>
</dbReference>
<dbReference type="GO" id="GO:0047952">
    <property type="term" value="F:glycerol-3-phosphate dehydrogenase [NAD(P)+] activity"/>
    <property type="evidence" value="ECO:0007669"/>
    <property type="project" value="UniProtKB-UniRule"/>
</dbReference>
<dbReference type="GO" id="GO:0051287">
    <property type="term" value="F:NAD binding"/>
    <property type="evidence" value="ECO:0007669"/>
    <property type="project" value="InterPro"/>
</dbReference>
<dbReference type="GO" id="GO:0005975">
    <property type="term" value="P:carbohydrate metabolic process"/>
    <property type="evidence" value="ECO:0007669"/>
    <property type="project" value="InterPro"/>
</dbReference>
<dbReference type="GO" id="GO:0046167">
    <property type="term" value="P:glycerol-3-phosphate biosynthetic process"/>
    <property type="evidence" value="ECO:0007669"/>
    <property type="project" value="UniProtKB-UniRule"/>
</dbReference>
<dbReference type="GO" id="GO:0046168">
    <property type="term" value="P:glycerol-3-phosphate catabolic process"/>
    <property type="evidence" value="ECO:0007669"/>
    <property type="project" value="InterPro"/>
</dbReference>
<dbReference type="GO" id="GO:0006650">
    <property type="term" value="P:glycerophospholipid metabolic process"/>
    <property type="evidence" value="ECO:0007669"/>
    <property type="project" value="UniProtKB-UniRule"/>
</dbReference>
<dbReference type="GO" id="GO:0008654">
    <property type="term" value="P:phospholipid biosynthetic process"/>
    <property type="evidence" value="ECO:0007669"/>
    <property type="project" value="UniProtKB-KW"/>
</dbReference>
<dbReference type="FunFam" id="1.10.1040.10:FF:000001">
    <property type="entry name" value="Glycerol-3-phosphate dehydrogenase [NAD(P)+]"/>
    <property type="match status" value="1"/>
</dbReference>
<dbReference type="FunFam" id="3.40.50.720:FF:000019">
    <property type="entry name" value="Glycerol-3-phosphate dehydrogenase [NAD(P)+]"/>
    <property type="match status" value="1"/>
</dbReference>
<dbReference type="Gene3D" id="1.10.1040.10">
    <property type="entry name" value="N-(1-d-carboxylethyl)-l-norvaline Dehydrogenase, domain 2"/>
    <property type="match status" value="1"/>
</dbReference>
<dbReference type="Gene3D" id="3.40.50.720">
    <property type="entry name" value="NAD(P)-binding Rossmann-like Domain"/>
    <property type="match status" value="1"/>
</dbReference>
<dbReference type="HAMAP" id="MF_00394">
    <property type="entry name" value="NAD_Glyc3P_dehydrog"/>
    <property type="match status" value="1"/>
</dbReference>
<dbReference type="InterPro" id="IPR008927">
    <property type="entry name" value="6-PGluconate_DH-like_C_sf"/>
</dbReference>
<dbReference type="InterPro" id="IPR013328">
    <property type="entry name" value="6PGD_dom2"/>
</dbReference>
<dbReference type="InterPro" id="IPR006168">
    <property type="entry name" value="G3P_DH_NAD-dep"/>
</dbReference>
<dbReference type="InterPro" id="IPR006109">
    <property type="entry name" value="G3P_DH_NAD-dep_C"/>
</dbReference>
<dbReference type="InterPro" id="IPR011128">
    <property type="entry name" value="G3P_DH_NAD-dep_N"/>
</dbReference>
<dbReference type="InterPro" id="IPR036291">
    <property type="entry name" value="NAD(P)-bd_dom_sf"/>
</dbReference>
<dbReference type="NCBIfam" id="NF000940">
    <property type="entry name" value="PRK00094.1-2"/>
    <property type="match status" value="1"/>
</dbReference>
<dbReference type="NCBIfam" id="NF000941">
    <property type="entry name" value="PRK00094.1-3"/>
    <property type="match status" value="1"/>
</dbReference>
<dbReference type="NCBIfam" id="NF000942">
    <property type="entry name" value="PRK00094.1-4"/>
    <property type="match status" value="1"/>
</dbReference>
<dbReference type="PANTHER" id="PTHR11728">
    <property type="entry name" value="GLYCEROL-3-PHOSPHATE DEHYDROGENASE"/>
    <property type="match status" value="1"/>
</dbReference>
<dbReference type="PANTHER" id="PTHR11728:SF1">
    <property type="entry name" value="GLYCEROL-3-PHOSPHATE DEHYDROGENASE [NAD(+)] 2, CHLOROPLASTIC"/>
    <property type="match status" value="1"/>
</dbReference>
<dbReference type="Pfam" id="PF07479">
    <property type="entry name" value="NAD_Gly3P_dh_C"/>
    <property type="match status" value="1"/>
</dbReference>
<dbReference type="Pfam" id="PF01210">
    <property type="entry name" value="NAD_Gly3P_dh_N"/>
    <property type="match status" value="1"/>
</dbReference>
<dbReference type="PIRSF" id="PIRSF000114">
    <property type="entry name" value="Glycerol-3-P_dh"/>
    <property type="match status" value="1"/>
</dbReference>
<dbReference type="PRINTS" id="PR00077">
    <property type="entry name" value="GPDHDRGNASE"/>
</dbReference>
<dbReference type="SUPFAM" id="SSF48179">
    <property type="entry name" value="6-phosphogluconate dehydrogenase C-terminal domain-like"/>
    <property type="match status" value="1"/>
</dbReference>
<dbReference type="SUPFAM" id="SSF51735">
    <property type="entry name" value="NAD(P)-binding Rossmann-fold domains"/>
    <property type="match status" value="1"/>
</dbReference>
<dbReference type="PROSITE" id="PS00957">
    <property type="entry name" value="NAD_G3PDH"/>
    <property type="match status" value="1"/>
</dbReference>
<protein>
    <recommendedName>
        <fullName evidence="1">Glycerol-3-phosphate dehydrogenase [NAD(P)+]</fullName>
        <ecNumber evidence="1">1.1.1.94</ecNumber>
    </recommendedName>
    <alternativeName>
        <fullName evidence="1">NAD(P)(+)-dependent glycerol-3-phosphate dehydrogenase</fullName>
    </alternativeName>
    <alternativeName>
        <fullName evidence="1">NAD(P)H-dependent dihydroxyacetone-phosphate reductase</fullName>
    </alternativeName>
</protein>
<organism>
    <name type="scientific">Latilactobacillus sakei subsp. sakei (strain 23K)</name>
    <name type="common">Lactobacillus sakei subsp. sakei</name>
    <dbReference type="NCBI Taxonomy" id="314315"/>
    <lineage>
        <taxon>Bacteria</taxon>
        <taxon>Bacillati</taxon>
        <taxon>Bacillota</taxon>
        <taxon>Bacilli</taxon>
        <taxon>Lactobacillales</taxon>
        <taxon>Lactobacillaceae</taxon>
        <taxon>Latilactobacillus</taxon>
    </lineage>
</organism>
<comment type="function">
    <text evidence="1">Catalyzes the reduction of the glycolytic intermediate dihydroxyacetone phosphate (DHAP) to sn-glycerol 3-phosphate (G3P), the key precursor for phospholipid synthesis.</text>
</comment>
<comment type="catalytic activity">
    <reaction evidence="1">
        <text>sn-glycerol 3-phosphate + NAD(+) = dihydroxyacetone phosphate + NADH + H(+)</text>
        <dbReference type="Rhea" id="RHEA:11092"/>
        <dbReference type="ChEBI" id="CHEBI:15378"/>
        <dbReference type="ChEBI" id="CHEBI:57540"/>
        <dbReference type="ChEBI" id="CHEBI:57597"/>
        <dbReference type="ChEBI" id="CHEBI:57642"/>
        <dbReference type="ChEBI" id="CHEBI:57945"/>
        <dbReference type="EC" id="1.1.1.94"/>
    </reaction>
    <physiologicalReaction direction="right-to-left" evidence="1">
        <dbReference type="Rhea" id="RHEA:11094"/>
    </physiologicalReaction>
</comment>
<comment type="catalytic activity">
    <reaction evidence="1">
        <text>sn-glycerol 3-phosphate + NADP(+) = dihydroxyacetone phosphate + NADPH + H(+)</text>
        <dbReference type="Rhea" id="RHEA:11096"/>
        <dbReference type="ChEBI" id="CHEBI:15378"/>
        <dbReference type="ChEBI" id="CHEBI:57597"/>
        <dbReference type="ChEBI" id="CHEBI:57642"/>
        <dbReference type="ChEBI" id="CHEBI:57783"/>
        <dbReference type="ChEBI" id="CHEBI:58349"/>
        <dbReference type="EC" id="1.1.1.94"/>
    </reaction>
    <physiologicalReaction direction="right-to-left" evidence="1">
        <dbReference type="Rhea" id="RHEA:11098"/>
    </physiologicalReaction>
</comment>
<comment type="pathway">
    <text evidence="1">Membrane lipid metabolism; glycerophospholipid metabolism.</text>
</comment>
<comment type="subcellular location">
    <subcellularLocation>
        <location evidence="1">Cytoplasm</location>
    </subcellularLocation>
</comment>
<comment type="similarity">
    <text evidence="1">Belongs to the NAD-dependent glycerol-3-phosphate dehydrogenase family.</text>
</comment>
<accession>Q38YA9</accession>
<evidence type="ECO:0000255" key="1">
    <source>
        <dbReference type="HAMAP-Rule" id="MF_00394"/>
    </source>
</evidence>
<name>GPDA_LATSS</name>
<keyword id="KW-0963">Cytoplasm</keyword>
<keyword id="KW-0444">Lipid biosynthesis</keyword>
<keyword id="KW-0443">Lipid metabolism</keyword>
<keyword id="KW-0520">NAD</keyword>
<keyword id="KW-0521">NADP</keyword>
<keyword id="KW-0547">Nucleotide-binding</keyword>
<keyword id="KW-0560">Oxidoreductase</keyword>
<keyword id="KW-0594">Phospholipid biosynthesis</keyword>
<keyword id="KW-1208">Phospholipid metabolism</keyword>
<keyword id="KW-1185">Reference proteome</keyword>